<protein>
    <recommendedName>
        <fullName evidence="1">Nucleoid-associated protein EbfC</fullName>
    </recommendedName>
</protein>
<comment type="function">
    <text evidence="2 3">Binds to DNA and alters its conformation. May be involved in global regulation of gene expression. Binds specifically and non-specifically to DNA, preferentially to the 4 bp broken palindrome 5'-GTnAC-3'. Affects expression of a wide variety of genes, encoding both structural and metabolic proteins.</text>
</comment>
<comment type="subunit">
    <text evidence="1 2">Homodimer. Can form tetramers and octamers in solution.</text>
</comment>
<comment type="subcellular location">
    <subcellularLocation>
        <location evidence="1 3">Cytoplasm</location>
        <location evidence="1 3">Nucleoid</location>
    </subcellularLocation>
</comment>
<comment type="induction">
    <text evidence="3">Transcribed at high levels in rapidly growing cells, but is undetectable in stationary-phase cells (PubMed:22544270).</text>
</comment>
<comment type="similarity">
    <text evidence="1">Belongs to the YbaB/EbfC family.</text>
</comment>
<reference key="1">
    <citation type="journal article" date="1997" name="Nature">
        <title>Genomic sequence of a Lyme disease spirochaete, Borrelia burgdorferi.</title>
        <authorList>
            <person name="Fraser C.M."/>
            <person name="Casjens S."/>
            <person name="Huang W.M."/>
            <person name="Sutton G.G."/>
            <person name="Clayton R.A."/>
            <person name="Lathigra R."/>
            <person name="White O."/>
            <person name="Ketchum K.A."/>
            <person name="Dodson R.J."/>
            <person name="Hickey E.K."/>
            <person name="Gwinn M.L."/>
            <person name="Dougherty B.A."/>
            <person name="Tomb J.-F."/>
            <person name="Fleischmann R.D."/>
            <person name="Richardson D.L."/>
            <person name="Peterson J.D."/>
            <person name="Kerlavage A.R."/>
            <person name="Quackenbush J."/>
            <person name="Salzberg S.L."/>
            <person name="Hanson M."/>
            <person name="van Vugt R."/>
            <person name="Palmer N."/>
            <person name="Adams M.D."/>
            <person name="Gocayne J.D."/>
            <person name="Weidman J.F."/>
            <person name="Utterback T.R."/>
            <person name="Watthey L."/>
            <person name="McDonald L.A."/>
            <person name="Artiach P."/>
            <person name="Bowman C."/>
            <person name="Garland S.A."/>
            <person name="Fujii C."/>
            <person name="Cotton M.D."/>
            <person name="Horst K."/>
            <person name="Roberts K.M."/>
            <person name="Hatch B."/>
            <person name="Smith H.O."/>
            <person name="Venter J.C."/>
        </authorList>
    </citation>
    <scope>NUCLEOTIDE SEQUENCE [LARGE SCALE GENOMIC DNA]</scope>
    <source>
        <strain>ATCC 35210 / DSM 4680 / CIP 102532 / B31</strain>
    </source>
</reference>
<reference key="2">
    <citation type="journal article" date="2009" name="Nucleic Acids Res.">
        <title>Borrelia burgdorferi EbfC defines a newly-identified, widespread family of bacterial DNA-binding proteins.</title>
        <authorList>
            <person name="Riley S.P."/>
            <person name="Bykowski T."/>
            <person name="Cooley A.E."/>
            <person name="Burns L.H."/>
            <person name="Babb K."/>
            <person name="Brissette C.A."/>
            <person name="Bowman A."/>
            <person name="Rotondi M."/>
            <person name="Miller M.C."/>
            <person name="DeMoll E."/>
            <person name="Lim K."/>
            <person name="Fried M.G."/>
            <person name="Stevenson B."/>
        </authorList>
    </citation>
    <scope>FUNCTION</scope>
    <scope>DNA-BINDING</scope>
    <scope>SUBUNIT</scope>
    <scope>MUTAGENESIS OF LYS-16; ASP-20; LYS-23; ASN-77; ASP-78; LYS-82; LYS-84; GLU-85 AND LYS-88</scope>
    <source>
        <strain>ATCC 35210 / DSM 4680 / CIP 102532 / B31</strain>
    </source>
</reference>
<reference key="3">
    <citation type="journal article" date="2012" name="J. Bacteriol.">
        <title>EbfC (YbaB) is a new type of bacterial nucleoid-associated protein and a global regulator of gene expression in the Lyme disease spirochete.</title>
        <authorList>
            <person name="Jutras B.L."/>
            <person name="Bowman A."/>
            <person name="Brissette C.A."/>
            <person name="Adams C.A."/>
            <person name="Verma A."/>
            <person name="Chenail A.M."/>
            <person name="Stevenson B."/>
        </authorList>
    </citation>
    <scope>FUNCTION</scope>
    <scope>DNA-BINDING</scope>
    <scope>SUBCELLULAR LOCATION</scope>
    <scope>INDUCTION</scope>
    <source>
        <strain>ATCC 35210 / DSM 4680 / CIP 102532 / B31</strain>
    </source>
</reference>
<evidence type="ECO:0000255" key="1">
    <source>
        <dbReference type="HAMAP-Rule" id="MF_00274"/>
    </source>
</evidence>
<evidence type="ECO:0000269" key="2">
    <source>
    </source>
</evidence>
<evidence type="ECO:0000269" key="3">
    <source>
    </source>
</evidence>
<dbReference type="EMBL" id="AE000783">
    <property type="protein sequence ID" value="AAC66830.2"/>
    <property type="molecule type" value="Genomic_DNA"/>
</dbReference>
<dbReference type="PIR" id="E70157">
    <property type="entry name" value="E70157"/>
</dbReference>
<dbReference type="RefSeq" id="NP_212596.2">
    <property type="nucleotide sequence ID" value="NC_001318.1"/>
</dbReference>
<dbReference type="SMR" id="O51418"/>
<dbReference type="STRING" id="224326.BB_0462"/>
<dbReference type="PaxDb" id="224326-BB_0462"/>
<dbReference type="EnsemblBacteria" id="AAC66830">
    <property type="protein sequence ID" value="AAC66830"/>
    <property type="gene ID" value="BB_0462"/>
</dbReference>
<dbReference type="KEGG" id="bbu:BB_0462"/>
<dbReference type="PATRIC" id="fig|224326.49.peg.855"/>
<dbReference type="HOGENOM" id="CLU_140930_4_1_12"/>
<dbReference type="OrthoDB" id="350636at2"/>
<dbReference type="Proteomes" id="UP000001807">
    <property type="component" value="Chromosome"/>
</dbReference>
<dbReference type="GO" id="GO:0043590">
    <property type="term" value="C:bacterial nucleoid"/>
    <property type="evidence" value="ECO:0007669"/>
    <property type="project" value="UniProtKB-UniRule"/>
</dbReference>
<dbReference type="GO" id="GO:0005737">
    <property type="term" value="C:cytoplasm"/>
    <property type="evidence" value="ECO:0007669"/>
    <property type="project" value="UniProtKB-UniRule"/>
</dbReference>
<dbReference type="GO" id="GO:0003677">
    <property type="term" value="F:DNA binding"/>
    <property type="evidence" value="ECO:0007669"/>
    <property type="project" value="UniProtKB-UniRule"/>
</dbReference>
<dbReference type="Gene3D" id="3.30.1310.10">
    <property type="entry name" value="Nucleoid-associated protein YbaB-like domain"/>
    <property type="match status" value="1"/>
</dbReference>
<dbReference type="HAMAP" id="MF_00274">
    <property type="entry name" value="DNA_YbaB_EbfC"/>
    <property type="match status" value="1"/>
</dbReference>
<dbReference type="InterPro" id="IPR036894">
    <property type="entry name" value="YbaB-like_sf"/>
</dbReference>
<dbReference type="InterPro" id="IPR004401">
    <property type="entry name" value="YbaB/EbfC"/>
</dbReference>
<dbReference type="NCBIfam" id="TIGR00103">
    <property type="entry name" value="DNA_YbaB_EbfC"/>
    <property type="match status" value="1"/>
</dbReference>
<dbReference type="Pfam" id="PF02575">
    <property type="entry name" value="YbaB_DNA_bd"/>
    <property type="match status" value="1"/>
</dbReference>
<dbReference type="PIRSF" id="PIRSF004555">
    <property type="entry name" value="UCP004555"/>
    <property type="match status" value="1"/>
</dbReference>
<dbReference type="SUPFAM" id="SSF82607">
    <property type="entry name" value="YbaB-like"/>
    <property type="match status" value="1"/>
</dbReference>
<gene>
    <name evidence="1" type="primary">ebfC</name>
    <name type="ordered locus">BB_0462</name>
</gene>
<name>EBFC_BORBU</name>
<feature type="chain" id="PRO_0000170367" description="Nucleoid-associated protein EbfC">
    <location>
        <begin position="1"/>
        <end position="99"/>
    </location>
</feature>
<feature type="mutagenesis site" description="Forms homodimers, but does not bind DNA." evidence="2">
    <original>K</original>
    <variation>A</variation>
    <location>
        <position position="16"/>
    </location>
</feature>
<feature type="mutagenesis site" description="Forms homodimers, but does not bind DNA." evidence="2">
    <original>D</original>
    <variation>A</variation>
    <location>
        <position position="20"/>
    </location>
</feature>
<feature type="mutagenesis site" description="Forms homodimers, but does not bind DNA." evidence="2">
    <original>K</original>
    <variation>A</variation>
    <location>
        <position position="23"/>
    </location>
</feature>
<feature type="mutagenesis site" description="Does not dimerize and does not bind DNA." evidence="2">
    <original>N</original>
    <variation>A</variation>
    <location>
        <position position="77"/>
    </location>
</feature>
<feature type="mutagenesis site" description="Forms homodimers, but does not bind DNA." evidence="2">
    <original>D</original>
    <variation>A</variation>
    <location>
        <position position="78"/>
    </location>
</feature>
<feature type="mutagenesis site" description="Forms homodimers, but does not bind DNA." evidence="2">
    <original>K</original>
    <variation>A</variation>
    <location>
        <position position="82"/>
    </location>
</feature>
<feature type="mutagenesis site" description="Forms homodimers, but does not bind DNA." evidence="2">
    <original>K</original>
    <variation>A</variation>
    <location>
        <position position="84"/>
    </location>
</feature>
<feature type="mutagenesis site" description="Forms homodimers, but does not bind DNA." evidence="2">
    <original>E</original>
    <variation>A</variation>
    <location>
        <position position="85"/>
    </location>
</feature>
<feature type="mutagenesis site" description="Forms homodimers, but does not bind DNA." evidence="2">
    <original>K</original>
    <variation>A</variation>
    <location>
        <position position="88"/>
    </location>
</feature>
<accession>O51418</accession>
<sequence>MAVNPLDFLKNMSSVKNNIDNIKKEISKITVCGKAGSNIVTIEMDGEFNVKKVSINKEFFDDLDNDAFEQMIKSALNDAVSKVKEEIKLKTMGVLPFGM</sequence>
<proteinExistence type="evidence at protein level"/>
<keyword id="KW-0963">Cytoplasm</keyword>
<keyword id="KW-0238">DNA-binding</keyword>
<keyword id="KW-1185">Reference proteome</keyword>
<organism>
    <name type="scientific">Borreliella burgdorferi (strain ATCC 35210 / DSM 4680 / CIP 102532 / B31)</name>
    <name type="common">Borrelia burgdorferi</name>
    <dbReference type="NCBI Taxonomy" id="224326"/>
    <lineage>
        <taxon>Bacteria</taxon>
        <taxon>Pseudomonadati</taxon>
        <taxon>Spirochaetota</taxon>
        <taxon>Spirochaetia</taxon>
        <taxon>Spirochaetales</taxon>
        <taxon>Borreliaceae</taxon>
        <taxon>Borreliella</taxon>
    </lineage>
</organism>